<proteinExistence type="inferred from homology"/>
<comment type="function">
    <text evidence="1">One of the primary rRNA binding proteins, it binds directly to 16S rRNA where it nucleates assembly of the body of the 30S subunit.</text>
</comment>
<comment type="function">
    <text evidence="1">With S5 and S12 plays an important role in translational accuracy.</text>
</comment>
<comment type="subunit">
    <text evidence="1">Part of the 30S ribosomal subunit. Contacts protein S5. The interaction surface between S4 and S5 is involved in control of translational fidelity.</text>
</comment>
<comment type="similarity">
    <text evidence="1">Belongs to the universal ribosomal protein uS4 family.</text>
</comment>
<dbReference type="EMBL" id="FM177140">
    <property type="protein sequence ID" value="CAQ66556.1"/>
    <property type="molecule type" value="Genomic_DNA"/>
</dbReference>
<dbReference type="SMR" id="B3WDV5"/>
<dbReference type="KEGG" id="lcb:LCABL_14750"/>
<dbReference type="HOGENOM" id="CLU_092403_0_1_9"/>
<dbReference type="GO" id="GO:0015935">
    <property type="term" value="C:small ribosomal subunit"/>
    <property type="evidence" value="ECO:0007669"/>
    <property type="project" value="InterPro"/>
</dbReference>
<dbReference type="GO" id="GO:0019843">
    <property type="term" value="F:rRNA binding"/>
    <property type="evidence" value="ECO:0007669"/>
    <property type="project" value="UniProtKB-UniRule"/>
</dbReference>
<dbReference type="GO" id="GO:0003735">
    <property type="term" value="F:structural constituent of ribosome"/>
    <property type="evidence" value="ECO:0007669"/>
    <property type="project" value="InterPro"/>
</dbReference>
<dbReference type="GO" id="GO:0042274">
    <property type="term" value="P:ribosomal small subunit biogenesis"/>
    <property type="evidence" value="ECO:0007669"/>
    <property type="project" value="TreeGrafter"/>
</dbReference>
<dbReference type="GO" id="GO:0006412">
    <property type="term" value="P:translation"/>
    <property type="evidence" value="ECO:0007669"/>
    <property type="project" value="UniProtKB-UniRule"/>
</dbReference>
<dbReference type="CDD" id="cd00165">
    <property type="entry name" value="S4"/>
    <property type="match status" value="1"/>
</dbReference>
<dbReference type="FunFam" id="3.10.290.10:FF:000001">
    <property type="entry name" value="30S ribosomal protein S4"/>
    <property type="match status" value="1"/>
</dbReference>
<dbReference type="Gene3D" id="1.10.1050.10">
    <property type="entry name" value="Ribosomal Protein S4 Delta 41, Chain A, domain 1"/>
    <property type="match status" value="1"/>
</dbReference>
<dbReference type="Gene3D" id="3.10.290.10">
    <property type="entry name" value="RNA-binding S4 domain"/>
    <property type="match status" value="1"/>
</dbReference>
<dbReference type="HAMAP" id="MF_01306_B">
    <property type="entry name" value="Ribosomal_uS4_B"/>
    <property type="match status" value="1"/>
</dbReference>
<dbReference type="InterPro" id="IPR022801">
    <property type="entry name" value="Ribosomal_uS4"/>
</dbReference>
<dbReference type="InterPro" id="IPR005709">
    <property type="entry name" value="Ribosomal_uS4_bac-type"/>
</dbReference>
<dbReference type="InterPro" id="IPR018079">
    <property type="entry name" value="Ribosomal_uS4_CS"/>
</dbReference>
<dbReference type="InterPro" id="IPR001912">
    <property type="entry name" value="Ribosomal_uS4_N"/>
</dbReference>
<dbReference type="InterPro" id="IPR002942">
    <property type="entry name" value="S4_RNA-bd"/>
</dbReference>
<dbReference type="InterPro" id="IPR036986">
    <property type="entry name" value="S4_RNA-bd_sf"/>
</dbReference>
<dbReference type="NCBIfam" id="NF003717">
    <property type="entry name" value="PRK05327.1"/>
    <property type="match status" value="1"/>
</dbReference>
<dbReference type="NCBIfam" id="TIGR01017">
    <property type="entry name" value="rpsD_bact"/>
    <property type="match status" value="1"/>
</dbReference>
<dbReference type="PANTHER" id="PTHR11831">
    <property type="entry name" value="30S 40S RIBOSOMAL PROTEIN"/>
    <property type="match status" value="1"/>
</dbReference>
<dbReference type="PANTHER" id="PTHR11831:SF4">
    <property type="entry name" value="SMALL RIBOSOMAL SUBUNIT PROTEIN US4M"/>
    <property type="match status" value="1"/>
</dbReference>
<dbReference type="Pfam" id="PF00163">
    <property type="entry name" value="Ribosomal_S4"/>
    <property type="match status" value="1"/>
</dbReference>
<dbReference type="Pfam" id="PF01479">
    <property type="entry name" value="S4"/>
    <property type="match status" value="1"/>
</dbReference>
<dbReference type="SMART" id="SM01390">
    <property type="entry name" value="Ribosomal_S4"/>
    <property type="match status" value="1"/>
</dbReference>
<dbReference type="SMART" id="SM00363">
    <property type="entry name" value="S4"/>
    <property type="match status" value="1"/>
</dbReference>
<dbReference type="SUPFAM" id="SSF55174">
    <property type="entry name" value="Alpha-L RNA-binding motif"/>
    <property type="match status" value="1"/>
</dbReference>
<dbReference type="PROSITE" id="PS00632">
    <property type="entry name" value="RIBOSOMAL_S4"/>
    <property type="match status" value="1"/>
</dbReference>
<dbReference type="PROSITE" id="PS50889">
    <property type="entry name" value="S4"/>
    <property type="match status" value="1"/>
</dbReference>
<sequence length="203" mass="23306">MSRYTGPRWKQSRRLGLSLSGTGKELARRPYAPGDHGANNRRKISEYGQQLREKQKLRWMYGLNERQFQNLFLRAGKIKEGTHGDNFMILLETRLDNLVFRLGLASSRPQARQLVNHGHITVDGKRVDIPSYEVEPGQVIALRERSQNLAIVNEAIENTVSRPAYVTFDDTKKTGSLVRLPERGELEPEVDESLVVEYYNQKL</sequence>
<accession>B3WDV5</accession>
<reference key="1">
    <citation type="submission" date="2008-06" db="EMBL/GenBank/DDBJ databases">
        <title>Lactobacillus casei BL23 complete genome sequence.</title>
        <authorList>
            <person name="Maze A."/>
            <person name="Boel G."/>
            <person name="Bourand A."/>
            <person name="Loux V."/>
            <person name="Gibrat J.F."/>
            <person name="Zuniga M."/>
            <person name="Hartke A."/>
            <person name="Deutscher J."/>
        </authorList>
    </citation>
    <scope>NUCLEOTIDE SEQUENCE [LARGE SCALE GENOMIC DNA]</scope>
    <source>
        <strain>BL23</strain>
    </source>
</reference>
<protein>
    <recommendedName>
        <fullName evidence="1">Small ribosomal subunit protein uS4</fullName>
    </recommendedName>
    <alternativeName>
        <fullName evidence="2">30S ribosomal protein S4</fullName>
    </alternativeName>
</protein>
<organism>
    <name type="scientific">Lacticaseibacillus casei (strain BL23)</name>
    <name type="common">Lactobacillus casei</name>
    <dbReference type="NCBI Taxonomy" id="543734"/>
    <lineage>
        <taxon>Bacteria</taxon>
        <taxon>Bacillati</taxon>
        <taxon>Bacillota</taxon>
        <taxon>Bacilli</taxon>
        <taxon>Lactobacillales</taxon>
        <taxon>Lactobacillaceae</taxon>
        <taxon>Lacticaseibacillus</taxon>
    </lineage>
</organism>
<name>RS4_LACCB</name>
<feature type="chain" id="PRO_1000140748" description="Small ribosomal subunit protein uS4">
    <location>
        <begin position="1"/>
        <end position="203"/>
    </location>
</feature>
<feature type="domain" description="S4 RNA-binding" evidence="1">
    <location>
        <begin position="93"/>
        <end position="156"/>
    </location>
</feature>
<keyword id="KW-0687">Ribonucleoprotein</keyword>
<keyword id="KW-0689">Ribosomal protein</keyword>
<keyword id="KW-0694">RNA-binding</keyword>
<keyword id="KW-0699">rRNA-binding</keyword>
<gene>
    <name evidence="1" type="primary">rpsD</name>
    <name type="ordered locus">LCABL_14750</name>
</gene>
<evidence type="ECO:0000255" key="1">
    <source>
        <dbReference type="HAMAP-Rule" id="MF_01306"/>
    </source>
</evidence>
<evidence type="ECO:0000305" key="2"/>